<sequence>MEKREELYRGKAKSVYKTDDADRLILLFRNDTSAFDGKRIEQLDRKGMVNNKFNAFIMQKLEAAGIPTQFDKLLADNEVLVKKLDMIPVECVVRNYAAGSLVKRLGVEEGMKLNPYTFELFLKDDAKGDPFINESHVVAFGWGTAEQLARMKELSLKVNEVLSKLFDDAGLLLVDFKLEFGVFSDGSIVLGDEFSPDGCRLWDKDTKKKMDKDRFRQGLGDVIEAYEEVANRLGVPL</sequence>
<reference key="1">
    <citation type="journal article" date="2009" name="Genome Biol.">
        <title>Genomic and genetic analyses of diversity and plant interactions of Pseudomonas fluorescens.</title>
        <authorList>
            <person name="Silby M.W."/>
            <person name="Cerdeno-Tarraga A.M."/>
            <person name="Vernikos G.S."/>
            <person name="Giddens S.R."/>
            <person name="Jackson R.W."/>
            <person name="Preston G.M."/>
            <person name="Zhang X.-X."/>
            <person name="Moon C.D."/>
            <person name="Gehrig S.M."/>
            <person name="Godfrey S.A.C."/>
            <person name="Knight C.G."/>
            <person name="Malone J.G."/>
            <person name="Robinson Z."/>
            <person name="Spiers A.J."/>
            <person name="Harris S."/>
            <person name="Challis G.L."/>
            <person name="Yaxley A.M."/>
            <person name="Harris D."/>
            <person name="Seeger K."/>
            <person name="Murphy L."/>
            <person name="Rutter S."/>
            <person name="Squares R."/>
            <person name="Quail M.A."/>
            <person name="Saunders E."/>
            <person name="Mavromatis K."/>
            <person name="Brettin T.S."/>
            <person name="Bentley S.D."/>
            <person name="Hothersall J."/>
            <person name="Stephens E."/>
            <person name="Thomas C.M."/>
            <person name="Parkhill J."/>
            <person name="Levy S.B."/>
            <person name="Rainey P.B."/>
            <person name="Thomson N.R."/>
        </authorList>
    </citation>
    <scope>NUCLEOTIDE SEQUENCE [LARGE SCALE GENOMIC DNA]</scope>
    <source>
        <strain>Pf0-1</strain>
    </source>
</reference>
<comment type="catalytic activity">
    <reaction evidence="1">
        <text>5-amino-1-(5-phospho-D-ribosyl)imidazole-4-carboxylate + L-aspartate + ATP = (2S)-2-[5-amino-1-(5-phospho-beta-D-ribosyl)imidazole-4-carboxamido]succinate + ADP + phosphate + 2 H(+)</text>
        <dbReference type="Rhea" id="RHEA:22628"/>
        <dbReference type="ChEBI" id="CHEBI:15378"/>
        <dbReference type="ChEBI" id="CHEBI:29991"/>
        <dbReference type="ChEBI" id="CHEBI:30616"/>
        <dbReference type="ChEBI" id="CHEBI:43474"/>
        <dbReference type="ChEBI" id="CHEBI:58443"/>
        <dbReference type="ChEBI" id="CHEBI:77657"/>
        <dbReference type="ChEBI" id="CHEBI:456216"/>
        <dbReference type="EC" id="6.3.2.6"/>
    </reaction>
</comment>
<comment type="pathway">
    <text evidence="1">Purine metabolism; IMP biosynthesis via de novo pathway; 5-amino-1-(5-phospho-D-ribosyl)imidazole-4-carboxamide from 5-amino-1-(5-phospho-D-ribosyl)imidazole-4-carboxylate: step 1/2.</text>
</comment>
<comment type="similarity">
    <text evidence="1">Belongs to the SAICAR synthetase family.</text>
</comment>
<organism>
    <name type="scientific">Pseudomonas fluorescens (strain Pf0-1)</name>
    <dbReference type="NCBI Taxonomy" id="205922"/>
    <lineage>
        <taxon>Bacteria</taxon>
        <taxon>Pseudomonadati</taxon>
        <taxon>Pseudomonadota</taxon>
        <taxon>Gammaproteobacteria</taxon>
        <taxon>Pseudomonadales</taxon>
        <taxon>Pseudomonadaceae</taxon>
        <taxon>Pseudomonas</taxon>
    </lineage>
</organism>
<feature type="chain" id="PRO_1000018760" description="Phosphoribosylaminoimidazole-succinocarboxamide synthase">
    <location>
        <begin position="1"/>
        <end position="237"/>
    </location>
</feature>
<evidence type="ECO:0000255" key="1">
    <source>
        <dbReference type="HAMAP-Rule" id="MF_00137"/>
    </source>
</evidence>
<gene>
    <name evidence="1" type="primary">purC</name>
    <name type="ordered locus">Pfl01_1374</name>
</gene>
<accession>Q3KGI9</accession>
<keyword id="KW-0067">ATP-binding</keyword>
<keyword id="KW-0436">Ligase</keyword>
<keyword id="KW-0547">Nucleotide-binding</keyword>
<keyword id="KW-0658">Purine biosynthesis</keyword>
<dbReference type="EC" id="6.3.2.6" evidence="1"/>
<dbReference type="EMBL" id="CP000094">
    <property type="protein sequence ID" value="ABA73117.1"/>
    <property type="molecule type" value="Genomic_DNA"/>
</dbReference>
<dbReference type="RefSeq" id="WP_007958019.1">
    <property type="nucleotide sequence ID" value="NC_007492.2"/>
</dbReference>
<dbReference type="SMR" id="Q3KGI9"/>
<dbReference type="KEGG" id="pfo:Pfl01_1374"/>
<dbReference type="eggNOG" id="COG0152">
    <property type="taxonomic scope" value="Bacteria"/>
</dbReference>
<dbReference type="HOGENOM" id="CLU_061495_2_0_6"/>
<dbReference type="UniPathway" id="UPA00074">
    <property type="reaction ID" value="UER00131"/>
</dbReference>
<dbReference type="Proteomes" id="UP000002704">
    <property type="component" value="Chromosome"/>
</dbReference>
<dbReference type="GO" id="GO:0005829">
    <property type="term" value="C:cytosol"/>
    <property type="evidence" value="ECO:0007669"/>
    <property type="project" value="TreeGrafter"/>
</dbReference>
<dbReference type="GO" id="GO:0005524">
    <property type="term" value="F:ATP binding"/>
    <property type="evidence" value="ECO:0007669"/>
    <property type="project" value="UniProtKB-KW"/>
</dbReference>
<dbReference type="GO" id="GO:0004639">
    <property type="term" value="F:phosphoribosylaminoimidazolesuccinocarboxamide synthase activity"/>
    <property type="evidence" value="ECO:0007669"/>
    <property type="project" value="UniProtKB-UniRule"/>
</dbReference>
<dbReference type="GO" id="GO:0006189">
    <property type="term" value="P:'de novo' IMP biosynthetic process"/>
    <property type="evidence" value="ECO:0007669"/>
    <property type="project" value="UniProtKB-UniRule"/>
</dbReference>
<dbReference type="GO" id="GO:0009236">
    <property type="term" value="P:cobalamin biosynthetic process"/>
    <property type="evidence" value="ECO:0007669"/>
    <property type="project" value="InterPro"/>
</dbReference>
<dbReference type="CDD" id="cd01415">
    <property type="entry name" value="SAICAR_synt_PurC"/>
    <property type="match status" value="1"/>
</dbReference>
<dbReference type="FunFam" id="3.30.200.20:FF:000086">
    <property type="entry name" value="Phosphoribosylaminoimidazole-succinocarboxamide synthase"/>
    <property type="match status" value="1"/>
</dbReference>
<dbReference type="FunFam" id="3.30.470.20:FF:000006">
    <property type="entry name" value="Phosphoribosylaminoimidazole-succinocarboxamide synthase"/>
    <property type="match status" value="1"/>
</dbReference>
<dbReference type="Gene3D" id="3.30.470.20">
    <property type="entry name" value="ATP-grasp fold, B domain"/>
    <property type="match status" value="1"/>
</dbReference>
<dbReference type="Gene3D" id="3.30.200.20">
    <property type="entry name" value="Phosphorylase Kinase, domain 1"/>
    <property type="match status" value="1"/>
</dbReference>
<dbReference type="HAMAP" id="MF_00137">
    <property type="entry name" value="SAICAR_synth"/>
    <property type="match status" value="1"/>
</dbReference>
<dbReference type="InterPro" id="IPR028923">
    <property type="entry name" value="SAICAR_synt/ADE2_N"/>
</dbReference>
<dbReference type="InterPro" id="IPR033934">
    <property type="entry name" value="SAICAR_synt_PurC"/>
</dbReference>
<dbReference type="InterPro" id="IPR001636">
    <property type="entry name" value="SAICAR_synth"/>
</dbReference>
<dbReference type="InterPro" id="IPR050089">
    <property type="entry name" value="SAICAR_synthetase"/>
</dbReference>
<dbReference type="InterPro" id="IPR018236">
    <property type="entry name" value="SAICAR_synthetase_CS"/>
</dbReference>
<dbReference type="NCBIfam" id="TIGR00081">
    <property type="entry name" value="purC"/>
    <property type="match status" value="1"/>
</dbReference>
<dbReference type="PANTHER" id="PTHR43599">
    <property type="entry name" value="MULTIFUNCTIONAL PROTEIN ADE2"/>
    <property type="match status" value="1"/>
</dbReference>
<dbReference type="PANTHER" id="PTHR43599:SF3">
    <property type="entry name" value="SI:DKEY-6E2.2"/>
    <property type="match status" value="1"/>
</dbReference>
<dbReference type="Pfam" id="PF01259">
    <property type="entry name" value="SAICAR_synt"/>
    <property type="match status" value="1"/>
</dbReference>
<dbReference type="SUPFAM" id="SSF56104">
    <property type="entry name" value="SAICAR synthase-like"/>
    <property type="match status" value="1"/>
</dbReference>
<dbReference type="PROSITE" id="PS01057">
    <property type="entry name" value="SAICAR_SYNTHETASE_1"/>
    <property type="match status" value="1"/>
</dbReference>
<dbReference type="PROSITE" id="PS01058">
    <property type="entry name" value="SAICAR_SYNTHETASE_2"/>
    <property type="match status" value="1"/>
</dbReference>
<proteinExistence type="inferred from homology"/>
<name>PUR7_PSEPF</name>
<protein>
    <recommendedName>
        <fullName evidence="1">Phosphoribosylaminoimidazole-succinocarboxamide synthase</fullName>
        <ecNumber evidence="1">6.3.2.6</ecNumber>
    </recommendedName>
    <alternativeName>
        <fullName evidence="1">SAICAR synthetase</fullName>
    </alternativeName>
</protein>